<comment type="function">
    <text evidence="2">Catalyzes the conversion of sedoheptulose 7-phosphate to 2-epi-valiolone, which may serve as an alternative precursor for aminocyclitol biosynthesis.</text>
</comment>
<comment type="catalytic activity">
    <reaction evidence="2">
        <text>D-sedoheptulose 7-phosphate = 2-epi-valiolone + phosphate</text>
        <dbReference type="Rhea" id="RHEA:49564"/>
        <dbReference type="ChEBI" id="CHEBI:43474"/>
        <dbReference type="ChEBI" id="CHEBI:57483"/>
        <dbReference type="ChEBI" id="CHEBI:131717"/>
        <dbReference type="EC" id="4.2.3.155"/>
    </reaction>
</comment>
<comment type="cofactor">
    <cofactor evidence="2">
        <name>NAD(+)</name>
        <dbReference type="ChEBI" id="CHEBI:57540"/>
    </cofactor>
</comment>
<comment type="cofactor">
    <cofactor evidence="2">
        <name>Co(2+)</name>
        <dbReference type="ChEBI" id="CHEBI:48828"/>
    </cofactor>
    <cofactor evidence="2">
        <name>Zn(2+)</name>
        <dbReference type="ChEBI" id="CHEBI:29105"/>
    </cofactor>
    <text evidence="2">Binds 1 divalent metal cation per subunit. Co(2+) is the preferred cofactor.</text>
</comment>
<comment type="biophysicochemical properties">
    <kinetics>
        <KM evidence="2">59.9 uM for sedoheptulose 7-phosphate</KM>
        <text evidence="2">kcat is 2.0 min(-1).</text>
    </kinetics>
</comment>
<comment type="similarity">
    <text evidence="4">Belongs to the sugar phosphate cyclases superfamily. EVS family.</text>
</comment>
<organism>
    <name type="scientific">Actinosynnema mirum (strain ATCC 29888 / DSM 43827 / JCM 3225 / NBRC 14064 / NCIMB 13271 / NRRL B-12336 / IMRU 3971 / 101)</name>
    <dbReference type="NCBI Taxonomy" id="446462"/>
    <lineage>
        <taxon>Bacteria</taxon>
        <taxon>Bacillati</taxon>
        <taxon>Actinomycetota</taxon>
        <taxon>Actinomycetes</taxon>
        <taxon>Pseudonocardiales</taxon>
        <taxon>Pseudonocardiaceae</taxon>
        <taxon>Actinosynnema</taxon>
    </lineage>
</organism>
<reference key="1">
    <citation type="journal article" date="2009" name="Stand. Genomic Sci.">
        <title>Complete genome sequence of Actinosynnema mirum type strain (101).</title>
        <authorList>
            <person name="Land M."/>
            <person name="Lapidus A."/>
            <person name="Mayilraj S."/>
            <person name="Chen F."/>
            <person name="Copeland A."/>
            <person name="Del Rio T.G."/>
            <person name="Nolan M."/>
            <person name="Lucas S."/>
            <person name="Tice H."/>
            <person name="Cheng J.F."/>
            <person name="Chertkov O."/>
            <person name="Bruce D."/>
            <person name="Goodwin L."/>
            <person name="Pitluck S."/>
            <person name="Rohde M."/>
            <person name="Goker M."/>
            <person name="Pati A."/>
            <person name="Ivanova N."/>
            <person name="Mavromatis K."/>
            <person name="Chen A."/>
            <person name="Palaniappan K."/>
            <person name="Hauser L."/>
            <person name="Chang Y.J."/>
            <person name="Jeffries C.C."/>
            <person name="Brettin T."/>
            <person name="Detter J.C."/>
            <person name="Han C."/>
            <person name="Chain P."/>
            <person name="Tindall B.J."/>
            <person name="Bristow J."/>
            <person name="Eisen J.A."/>
            <person name="Markowitz V."/>
            <person name="Hugenholtz P."/>
            <person name="Kyrpides N.C."/>
            <person name="Klenk H.P."/>
        </authorList>
    </citation>
    <scope>NUCLEOTIDE SEQUENCE [LARGE SCALE GENOMIC DNA]</scope>
    <source>
        <strain>ATCC 29888 / DSM 43827 / JCM 3225 / NBRC 14064 / NCIMB 13271 / NRRL B-12336 / IMRU 3971 / 101</strain>
    </source>
</reference>
<reference key="2">
    <citation type="journal article" date="2012" name="J. Am. Chem. Soc.">
        <title>Evolutionary divergence of sedoheptulose 7-phosphate cyclases leads to several distinct cyclic products.</title>
        <authorList>
            <person name="Asamizu S."/>
            <person name="Xie P."/>
            <person name="Brumsted C.J."/>
            <person name="Flatt P.M."/>
            <person name="Mahmud T."/>
        </authorList>
    </citation>
    <scope>FUNCTION</scope>
    <scope>CATALYTIC ACTIVITY</scope>
    <scope>COFACTOR</scope>
    <scope>BIOPHYSICOCHEMICAL PROPERTIES</scope>
    <source>
        <strain>ATCC 29888 / DSM 43827 / JCM 3225 / NBRC 14064 / NCIMB 13271 / NRRL B-12336 / IMRU 3971 / 101</strain>
    </source>
</reference>
<keyword id="KW-0170">Cobalt</keyword>
<keyword id="KW-0456">Lyase</keyword>
<keyword id="KW-0479">Metal-binding</keyword>
<keyword id="KW-0520">NAD</keyword>
<keyword id="KW-0547">Nucleotide-binding</keyword>
<keyword id="KW-1185">Reference proteome</keyword>
<keyword id="KW-0862">Zinc</keyword>
<protein>
    <recommendedName>
        <fullName evidence="3">2-epi-valiolone synthase</fullName>
        <shortName evidence="3">EVS</shortName>
        <ecNumber evidence="2">4.2.3.155</ecNumber>
    </recommendedName>
    <alternativeName>
        <fullName evidence="3">Sedoheptulose 7-phosphate cyclase</fullName>
    </alternativeName>
</protein>
<evidence type="ECO:0000250" key="1">
    <source>
        <dbReference type="UniProtKB" id="Q3M6C3"/>
    </source>
</evidence>
<evidence type="ECO:0000269" key="2">
    <source>
    </source>
</evidence>
<evidence type="ECO:0000303" key="3">
    <source>
    </source>
</evidence>
<evidence type="ECO:0000305" key="4"/>
<evidence type="ECO:0000312" key="5">
    <source>
        <dbReference type="EMBL" id="ACU35948.1"/>
    </source>
</evidence>
<proteinExistence type="evidence at protein level"/>
<accession>C6WFL3</accession>
<dbReference type="EC" id="4.2.3.155" evidence="2"/>
<dbReference type="EMBL" id="CP001630">
    <property type="protein sequence ID" value="ACU35948.1"/>
    <property type="molecule type" value="Genomic_DNA"/>
</dbReference>
<dbReference type="RefSeq" id="WP_015800837.1">
    <property type="nucleotide sequence ID" value="NC_013093.1"/>
</dbReference>
<dbReference type="SMR" id="C6WFL3"/>
<dbReference type="STRING" id="446462.Amir_2000"/>
<dbReference type="KEGG" id="ami:Amir_2000"/>
<dbReference type="eggNOG" id="COG0337">
    <property type="taxonomic scope" value="Bacteria"/>
</dbReference>
<dbReference type="HOGENOM" id="CLU_001201_0_2_11"/>
<dbReference type="OrthoDB" id="9806583at2"/>
<dbReference type="BioCyc" id="MetaCyc:MONOMER-19685"/>
<dbReference type="BRENDA" id="4.2.3.155">
    <property type="organism ID" value="14507"/>
</dbReference>
<dbReference type="Proteomes" id="UP000002213">
    <property type="component" value="Chromosome"/>
</dbReference>
<dbReference type="GO" id="GO:0005737">
    <property type="term" value="C:cytoplasm"/>
    <property type="evidence" value="ECO:0007669"/>
    <property type="project" value="InterPro"/>
</dbReference>
<dbReference type="GO" id="GO:0003856">
    <property type="term" value="F:3-dehydroquinate synthase activity"/>
    <property type="evidence" value="ECO:0007669"/>
    <property type="project" value="InterPro"/>
</dbReference>
<dbReference type="GO" id="GO:0046872">
    <property type="term" value="F:metal ion binding"/>
    <property type="evidence" value="ECO:0007669"/>
    <property type="project" value="UniProtKB-KW"/>
</dbReference>
<dbReference type="GO" id="GO:0000166">
    <property type="term" value="F:nucleotide binding"/>
    <property type="evidence" value="ECO:0007669"/>
    <property type="project" value="UniProtKB-KW"/>
</dbReference>
<dbReference type="GO" id="GO:0009073">
    <property type="term" value="P:aromatic amino acid family biosynthetic process"/>
    <property type="evidence" value="ECO:0007669"/>
    <property type="project" value="InterPro"/>
</dbReference>
<dbReference type="CDD" id="cd08195">
    <property type="entry name" value="DHQS"/>
    <property type="match status" value="1"/>
</dbReference>
<dbReference type="FunFam" id="3.40.50.1970:FF:000007">
    <property type="entry name" value="Pentafunctional AROM polypeptide"/>
    <property type="match status" value="1"/>
</dbReference>
<dbReference type="Gene3D" id="3.40.50.1970">
    <property type="match status" value="1"/>
</dbReference>
<dbReference type="Gene3D" id="1.20.1090.10">
    <property type="entry name" value="Dehydroquinate synthase-like - alpha domain"/>
    <property type="match status" value="1"/>
</dbReference>
<dbReference type="InterPro" id="IPR050071">
    <property type="entry name" value="Dehydroquinate_synthase"/>
</dbReference>
<dbReference type="InterPro" id="IPR016037">
    <property type="entry name" value="DHQ_synth_AroB"/>
</dbReference>
<dbReference type="InterPro" id="IPR030963">
    <property type="entry name" value="DHQ_synth_fam"/>
</dbReference>
<dbReference type="InterPro" id="IPR030960">
    <property type="entry name" value="DHQS/DOIS_N"/>
</dbReference>
<dbReference type="InterPro" id="IPR056179">
    <property type="entry name" value="DHQS_C"/>
</dbReference>
<dbReference type="NCBIfam" id="TIGR01357">
    <property type="entry name" value="aroB"/>
    <property type="match status" value="1"/>
</dbReference>
<dbReference type="PANTHER" id="PTHR43622">
    <property type="entry name" value="3-DEHYDROQUINATE SYNTHASE"/>
    <property type="match status" value="1"/>
</dbReference>
<dbReference type="PANTHER" id="PTHR43622:SF1">
    <property type="entry name" value="3-DEHYDROQUINATE SYNTHASE"/>
    <property type="match status" value="1"/>
</dbReference>
<dbReference type="Pfam" id="PF01761">
    <property type="entry name" value="DHQ_synthase"/>
    <property type="match status" value="1"/>
</dbReference>
<dbReference type="Pfam" id="PF24621">
    <property type="entry name" value="DHQS_C"/>
    <property type="match status" value="1"/>
</dbReference>
<dbReference type="PIRSF" id="PIRSF001455">
    <property type="entry name" value="DHQ_synth"/>
    <property type="match status" value="1"/>
</dbReference>
<dbReference type="SUPFAM" id="SSF56796">
    <property type="entry name" value="Dehydroquinate synthase-like"/>
    <property type="match status" value="1"/>
</dbReference>
<sequence>MDSPAGYRIHDNIPLPGNLDQVDVHVTRDDDYRIHVLPDVDRAVDALLTELDGRRAVVITDDVVADLHEGRVSAELAARGQLIGRTAIRAGEKSKSLTTAFELIDWLAEVNLARRDVVIALGGGVVVDTVGFVASAYMRGVPYVNMPTTLLAQVDAGIGGKVAVDHSEAKNLVGAFYQPKAVISCLEHLRTLDTRQIRSGLAEVVKKAVIASPELFDYIEANADDLLACASPAIDVLVHAAGAIKTKLVGRDPYEIDLRRPLNFGHTTGHAVETVTNYGPVLHGEAVAFGMVVAVDVARARGLVVPEVADRVTALIRRLGLPVALEELGAVPRVDDVVAALLKIRQIRDGSLRFVLPVELGATVIAEDVTEEEVRAALVRLR</sequence>
<gene>
    <name evidence="5" type="ordered locus">Amir_2000</name>
</gene>
<feature type="chain" id="PRO_0000441283" description="2-epi-valiolone synthase">
    <location>
        <begin position="1"/>
        <end position="382"/>
    </location>
</feature>
<feature type="binding site" evidence="1">
    <location>
        <begin position="92"/>
        <end position="95"/>
    </location>
    <ligand>
        <name>NAD(+)</name>
        <dbReference type="ChEBI" id="CHEBI:57540"/>
    </ligand>
</feature>
<feature type="binding site" evidence="1">
    <location>
        <begin position="124"/>
        <end position="128"/>
    </location>
    <ligand>
        <name>NAD(+)</name>
        <dbReference type="ChEBI" id="CHEBI:57540"/>
    </ligand>
</feature>
<feature type="binding site" evidence="1">
    <location>
        <begin position="148"/>
        <end position="149"/>
    </location>
    <ligand>
        <name>NAD(+)</name>
        <dbReference type="ChEBI" id="CHEBI:57540"/>
    </ligand>
</feature>
<feature type="binding site" evidence="1">
    <location>
        <position position="161"/>
    </location>
    <ligand>
        <name>NAD(+)</name>
        <dbReference type="ChEBI" id="CHEBI:57540"/>
    </ligand>
</feature>
<feature type="binding site" evidence="1">
    <location>
        <position position="170"/>
    </location>
    <ligand>
        <name>NAD(+)</name>
        <dbReference type="ChEBI" id="CHEBI:57540"/>
    </ligand>
</feature>
<feature type="binding site" evidence="1">
    <location>
        <begin position="188"/>
        <end position="191"/>
    </location>
    <ligand>
        <name>NAD(+)</name>
        <dbReference type="ChEBI" id="CHEBI:57540"/>
    </ligand>
</feature>
<feature type="binding site" evidence="1">
    <location>
        <position position="203"/>
    </location>
    <ligand>
        <name>Zn(2+)</name>
        <dbReference type="ChEBI" id="CHEBI:29105"/>
    </ligand>
</feature>
<feature type="binding site" evidence="1">
    <location>
        <position position="266"/>
    </location>
    <ligand>
        <name>Zn(2+)</name>
        <dbReference type="ChEBI" id="CHEBI:29105"/>
    </ligand>
</feature>
<feature type="binding site" evidence="1">
    <location>
        <position position="283"/>
    </location>
    <ligand>
        <name>Zn(2+)</name>
        <dbReference type="ChEBI" id="CHEBI:29105"/>
    </ligand>
</feature>
<name>EVS_ACTMD</name>